<comment type="function">
    <text evidence="1">The alpha subunit is responsible for the aldol cleavage of indoleglycerol phosphate to indole and glyceraldehyde 3-phosphate.</text>
</comment>
<comment type="catalytic activity">
    <reaction evidence="1">
        <text>(1S,2R)-1-C-(indol-3-yl)glycerol 3-phosphate + L-serine = D-glyceraldehyde 3-phosphate + L-tryptophan + H2O</text>
        <dbReference type="Rhea" id="RHEA:10532"/>
        <dbReference type="ChEBI" id="CHEBI:15377"/>
        <dbReference type="ChEBI" id="CHEBI:33384"/>
        <dbReference type="ChEBI" id="CHEBI:57912"/>
        <dbReference type="ChEBI" id="CHEBI:58866"/>
        <dbReference type="ChEBI" id="CHEBI:59776"/>
        <dbReference type="EC" id="4.2.1.20"/>
    </reaction>
</comment>
<comment type="pathway">
    <text evidence="1">Amino-acid biosynthesis; L-tryptophan biosynthesis; L-tryptophan from chorismate: step 5/5.</text>
</comment>
<comment type="subunit">
    <text evidence="1">Tetramer of two alpha and two beta chains.</text>
</comment>
<comment type="similarity">
    <text evidence="1">Belongs to the TrpA family.</text>
</comment>
<reference key="1">
    <citation type="journal article" date="2005" name="J. Bacteriol.">
        <title>Insights on evolution of virulence and resistance from the complete genome analysis of an early methicillin-resistant Staphylococcus aureus strain and a biofilm-producing methicillin-resistant Staphylococcus epidermidis strain.</title>
        <authorList>
            <person name="Gill S.R."/>
            <person name="Fouts D.E."/>
            <person name="Archer G.L."/>
            <person name="Mongodin E.F."/>
            <person name="DeBoy R.T."/>
            <person name="Ravel J."/>
            <person name="Paulsen I.T."/>
            <person name="Kolonay J.F."/>
            <person name="Brinkac L.M."/>
            <person name="Beanan M.J."/>
            <person name="Dodson R.J."/>
            <person name="Daugherty S.C."/>
            <person name="Madupu R."/>
            <person name="Angiuoli S.V."/>
            <person name="Durkin A.S."/>
            <person name="Haft D.H."/>
            <person name="Vamathevan J.J."/>
            <person name="Khouri H."/>
            <person name="Utterback T.R."/>
            <person name="Lee C."/>
            <person name="Dimitrov G."/>
            <person name="Jiang L."/>
            <person name="Qin H."/>
            <person name="Weidman J."/>
            <person name="Tran K."/>
            <person name="Kang K.H."/>
            <person name="Hance I.R."/>
            <person name="Nelson K.E."/>
            <person name="Fraser C.M."/>
        </authorList>
    </citation>
    <scope>NUCLEOTIDE SEQUENCE [LARGE SCALE GENOMIC DNA]</scope>
    <source>
        <strain>COL</strain>
    </source>
</reference>
<organism>
    <name type="scientific">Staphylococcus aureus (strain COL)</name>
    <dbReference type="NCBI Taxonomy" id="93062"/>
    <lineage>
        <taxon>Bacteria</taxon>
        <taxon>Bacillati</taxon>
        <taxon>Bacillota</taxon>
        <taxon>Bacilli</taxon>
        <taxon>Bacillales</taxon>
        <taxon>Staphylococcaceae</taxon>
        <taxon>Staphylococcus</taxon>
    </lineage>
</organism>
<evidence type="ECO:0000255" key="1">
    <source>
        <dbReference type="HAMAP-Rule" id="MF_00131"/>
    </source>
</evidence>
<gene>
    <name evidence="1" type="primary">trpA</name>
    <name type="ordered locus">SACOL1409</name>
</gene>
<accession>Q5HG46</accession>
<sequence>MTKLFIPYIMGNKDLIENATLLSENGADIIEIGVPFSDPVADGPVIMEAGQQAIKQGITIDYIFNQLEKHGDQIKCNYVLMTYYNIICHYGEQAFFEKCRDTGVYGLIIPDLPYELSQRLKQQFSHYGVKIISLVAMTTDDKRIKDIVSHAEGFIYTVTMNATTGQNGAFHPELKRKIESIKAIANVPVVAGFGIRTPQHVADIKEVADGIVIGSEIVKRFKSNTREEIIKYLQSIQQTLNN</sequence>
<dbReference type="EC" id="4.2.1.20" evidence="1"/>
<dbReference type="EMBL" id="CP000046">
    <property type="protein sequence ID" value="AAW36657.1"/>
    <property type="molecule type" value="Genomic_DNA"/>
</dbReference>
<dbReference type="RefSeq" id="WP_000163627.1">
    <property type="nucleotide sequence ID" value="NZ_JBGOFO010000003.1"/>
</dbReference>
<dbReference type="SMR" id="Q5HG46"/>
<dbReference type="KEGG" id="sac:SACOL1409"/>
<dbReference type="HOGENOM" id="CLU_016734_0_0_9"/>
<dbReference type="UniPathway" id="UPA00035">
    <property type="reaction ID" value="UER00044"/>
</dbReference>
<dbReference type="Proteomes" id="UP000000530">
    <property type="component" value="Chromosome"/>
</dbReference>
<dbReference type="GO" id="GO:0005829">
    <property type="term" value="C:cytosol"/>
    <property type="evidence" value="ECO:0007669"/>
    <property type="project" value="TreeGrafter"/>
</dbReference>
<dbReference type="GO" id="GO:0004834">
    <property type="term" value="F:tryptophan synthase activity"/>
    <property type="evidence" value="ECO:0007669"/>
    <property type="project" value="UniProtKB-UniRule"/>
</dbReference>
<dbReference type="CDD" id="cd04724">
    <property type="entry name" value="Tryptophan_synthase_alpha"/>
    <property type="match status" value="1"/>
</dbReference>
<dbReference type="Gene3D" id="3.20.20.70">
    <property type="entry name" value="Aldolase class I"/>
    <property type="match status" value="1"/>
</dbReference>
<dbReference type="HAMAP" id="MF_00131">
    <property type="entry name" value="Trp_synth_alpha"/>
    <property type="match status" value="1"/>
</dbReference>
<dbReference type="InterPro" id="IPR013785">
    <property type="entry name" value="Aldolase_TIM"/>
</dbReference>
<dbReference type="InterPro" id="IPR011060">
    <property type="entry name" value="RibuloseP-bd_barrel"/>
</dbReference>
<dbReference type="InterPro" id="IPR018204">
    <property type="entry name" value="Trp_synthase_alpha_AS"/>
</dbReference>
<dbReference type="InterPro" id="IPR002028">
    <property type="entry name" value="Trp_synthase_suA"/>
</dbReference>
<dbReference type="NCBIfam" id="TIGR00262">
    <property type="entry name" value="trpA"/>
    <property type="match status" value="1"/>
</dbReference>
<dbReference type="PANTHER" id="PTHR43406:SF1">
    <property type="entry name" value="TRYPTOPHAN SYNTHASE ALPHA CHAIN, CHLOROPLASTIC"/>
    <property type="match status" value="1"/>
</dbReference>
<dbReference type="PANTHER" id="PTHR43406">
    <property type="entry name" value="TRYPTOPHAN SYNTHASE, ALPHA CHAIN"/>
    <property type="match status" value="1"/>
</dbReference>
<dbReference type="Pfam" id="PF00290">
    <property type="entry name" value="Trp_syntA"/>
    <property type="match status" value="1"/>
</dbReference>
<dbReference type="SUPFAM" id="SSF51366">
    <property type="entry name" value="Ribulose-phoshate binding barrel"/>
    <property type="match status" value="1"/>
</dbReference>
<dbReference type="PROSITE" id="PS00167">
    <property type="entry name" value="TRP_SYNTHASE_ALPHA"/>
    <property type="match status" value="1"/>
</dbReference>
<protein>
    <recommendedName>
        <fullName evidence="1">Tryptophan synthase alpha chain</fullName>
        <ecNumber evidence="1">4.2.1.20</ecNumber>
    </recommendedName>
</protein>
<feature type="chain" id="PRO_0000098843" description="Tryptophan synthase alpha chain">
    <location>
        <begin position="1"/>
        <end position="242"/>
    </location>
</feature>
<feature type="active site" description="Proton acceptor" evidence="1">
    <location>
        <position position="31"/>
    </location>
</feature>
<feature type="active site" description="Proton acceptor" evidence="1">
    <location>
        <position position="42"/>
    </location>
</feature>
<name>TRPA_STAAC</name>
<proteinExistence type="inferred from homology"/>
<keyword id="KW-0028">Amino-acid biosynthesis</keyword>
<keyword id="KW-0057">Aromatic amino acid biosynthesis</keyword>
<keyword id="KW-0456">Lyase</keyword>
<keyword id="KW-0822">Tryptophan biosynthesis</keyword>